<dbReference type="EC" id="1.1.1.51" evidence="3"/>
<dbReference type="EC" id="1.1.1.62" evidence="3"/>
<dbReference type="EMBL" id="X89627">
    <property type="protein sequence ID" value="CAA61770.1"/>
    <property type="molecule type" value="mRNA"/>
</dbReference>
<dbReference type="CCDS" id="CCDS25445.1"/>
<dbReference type="PIR" id="S62652">
    <property type="entry name" value="S62652"/>
</dbReference>
<dbReference type="RefSeq" id="NP_034605.1">
    <property type="nucleotide sequence ID" value="NM_010475.2"/>
</dbReference>
<dbReference type="SMR" id="P51656"/>
<dbReference type="FunCoup" id="P51656">
    <property type="interactions" value="350"/>
</dbReference>
<dbReference type="STRING" id="10090.ENSMUSP00000019445"/>
<dbReference type="BindingDB" id="P51656"/>
<dbReference type="ChEMBL" id="CHEMBL1914269"/>
<dbReference type="SwissLipids" id="SLP:000001305"/>
<dbReference type="PaxDb" id="10090-ENSMUSP00000019445"/>
<dbReference type="ProteomicsDB" id="277328"/>
<dbReference type="Antibodypedia" id="16966">
    <property type="antibodies" value="292 antibodies from 33 providers"/>
</dbReference>
<dbReference type="DNASU" id="15485"/>
<dbReference type="Ensembl" id="ENSMUST00000019445.6">
    <property type="protein sequence ID" value="ENSMUSP00000019445.6"/>
    <property type="gene ID" value="ENSMUSG00000019301.6"/>
</dbReference>
<dbReference type="GeneID" id="15485"/>
<dbReference type="KEGG" id="mmu:15485"/>
<dbReference type="UCSC" id="uc007lnb.1">
    <property type="organism name" value="mouse"/>
</dbReference>
<dbReference type="AGR" id="MGI:105077"/>
<dbReference type="CTD" id="3292"/>
<dbReference type="MGI" id="MGI:105077">
    <property type="gene designation" value="Hsd17b1"/>
</dbReference>
<dbReference type="VEuPathDB" id="HostDB:ENSMUSG00000019301"/>
<dbReference type="eggNOG" id="KOG1205">
    <property type="taxonomic scope" value="Eukaryota"/>
</dbReference>
<dbReference type="GeneTree" id="ENSGT00940000160415"/>
<dbReference type="HOGENOM" id="CLU_010194_2_9_1"/>
<dbReference type="InParanoid" id="P51656"/>
<dbReference type="OMA" id="KGLHRDT"/>
<dbReference type="OrthoDB" id="47007at2759"/>
<dbReference type="PhylomeDB" id="P51656"/>
<dbReference type="TreeFam" id="TF105451"/>
<dbReference type="Reactome" id="R-MMU-193144">
    <property type="pathway name" value="Estrogen biosynthesis"/>
</dbReference>
<dbReference type="UniPathway" id="UPA00769"/>
<dbReference type="BioGRID-ORCS" id="15485">
    <property type="hits" value="4 hits in 81 CRISPR screens"/>
</dbReference>
<dbReference type="ChiTaRS" id="Hsd17b1">
    <property type="organism name" value="mouse"/>
</dbReference>
<dbReference type="PRO" id="PR:P51656"/>
<dbReference type="Proteomes" id="UP000000589">
    <property type="component" value="Chromosome 11"/>
</dbReference>
<dbReference type="RNAct" id="P51656">
    <property type="molecule type" value="protein"/>
</dbReference>
<dbReference type="Bgee" id="ENSMUSG00000019301">
    <property type="expression patterns" value="Expressed in cumulus cell and 41 other cell types or tissues"/>
</dbReference>
<dbReference type="ExpressionAtlas" id="P51656">
    <property type="expression patterns" value="baseline and differential"/>
</dbReference>
<dbReference type="GO" id="GO:0005829">
    <property type="term" value="C:cytosol"/>
    <property type="evidence" value="ECO:0007669"/>
    <property type="project" value="Ensembl"/>
</dbReference>
<dbReference type="GO" id="GO:0072582">
    <property type="term" value="F:17-beta-hydroxysteroid dehydrogenase (NADP+) activity"/>
    <property type="evidence" value="ECO:0000314"/>
    <property type="project" value="UniProtKB"/>
</dbReference>
<dbReference type="GO" id="GO:0004303">
    <property type="term" value="F:estradiol 17-beta-dehydrogenase [NAD(P)+] activity"/>
    <property type="evidence" value="ECO:0000314"/>
    <property type="project" value="UniProtKB"/>
</dbReference>
<dbReference type="GO" id="GO:1903924">
    <property type="term" value="F:estradiol binding"/>
    <property type="evidence" value="ECO:0007669"/>
    <property type="project" value="Ensembl"/>
</dbReference>
<dbReference type="GO" id="GO:0070401">
    <property type="term" value="F:NADP+ binding"/>
    <property type="evidence" value="ECO:0007669"/>
    <property type="project" value="Ensembl"/>
</dbReference>
<dbReference type="GO" id="GO:0042803">
    <property type="term" value="F:protein homodimerization activity"/>
    <property type="evidence" value="ECO:0000250"/>
    <property type="project" value="UniProtKB"/>
</dbReference>
<dbReference type="GO" id="GO:0047045">
    <property type="term" value="F:testosterone 17-beta-dehydrogenase (NADP+) activity"/>
    <property type="evidence" value="ECO:0007669"/>
    <property type="project" value="RHEA"/>
</dbReference>
<dbReference type="GO" id="GO:0047035">
    <property type="term" value="F:testosterone dehydrogenase (NAD+) activity"/>
    <property type="evidence" value="ECO:0007669"/>
    <property type="project" value="Ensembl"/>
</dbReference>
<dbReference type="GO" id="GO:0030283">
    <property type="term" value="F:testosterone dehydrogenase [NAD(P)+] activity"/>
    <property type="evidence" value="ECO:0000314"/>
    <property type="project" value="UniProtKB"/>
</dbReference>
<dbReference type="GO" id="GO:0060612">
    <property type="term" value="P:adipose tissue development"/>
    <property type="evidence" value="ECO:0000315"/>
    <property type="project" value="MGI"/>
</dbReference>
<dbReference type="GO" id="GO:0060348">
    <property type="term" value="P:bone development"/>
    <property type="evidence" value="ECO:0007669"/>
    <property type="project" value="Ensembl"/>
</dbReference>
<dbReference type="GO" id="GO:0071248">
    <property type="term" value="P:cellular response to metal ion"/>
    <property type="evidence" value="ECO:0007669"/>
    <property type="project" value="Ensembl"/>
</dbReference>
<dbReference type="GO" id="GO:0006703">
    <property type="term" value="P:estrogen biosynthetic process"/>
    <property type="evidence" value="ECO:0000314"/>
    <property type="project" value="UniProtKB"/>
</dbReference>
<dbReference type="GO" id="GO:0010467">
    <property type="term" value="P:gene expression"/>
    <property type="evidence" value="ECO:0000315"/>
    <property type="project" value="MGI"/>
</dbReference>
<dbReference type="GO" id="GO:0006629">
    <property type="term" value="P:lipid metabolic process"/>
    <property type="evidence" value="ECO:0000315"/>
    <property type="project" value="MGI"/>
</dbReference>
<dbReference type="GO" id="GO:0007040">
    <property type="term" value="P:lysosome organization"/>
    <property type="evidence" value="ECO:0000315"/>
    <property type="project" value="MGI"/>
</dbReference>
<dbReference type="GO" id="GO:0007519">
    <property type="term" value="P:skeletal muscle tissue development"/>
    <property type="evidence" value="ECO:0000315"/>
    <property type="project" value="MGI"/>
</dbReference>
<dbReference type="GO" id="GO:0061370">
    <property type="term" value="P:testosterone biosynthetic process"/>
    <property type="evidence" value="ECO:0000314"/>
    <property type="project" value="UniProtKB"/>
</dbReference>
<dbReference type="FunFam" id="3.40.50.720:FF:000323">
    <property type="entry name" value="Estradiol 17-beta-dehydrogenase 1"/>
    <property type="match status" value="1"/>
</dbReference>
<dbReference type="Gene3D" id="3.40.50.720">
    <property type="entry name" value="NAD(P)-binding Rossmann-like Domain"/>
    <property type="match status" value="1"/>
</dbReference>
<dbReference type="InterPro" id="IPR011348">
    <property type="entry name" value="17beta_DH"/>
</dbReference>
<dbReference type="InterPro" id="IPR036291">
    <property type="entry name" value="NAD(P)-bd_dom_sf"/>
</dbReference>
<dbReference type="InterPro" id="IPR020904">
    <property type="entry name" value="Sc_DH/Rdtase_CS"/>
</dbReference>
<dbReference type="InterPro" id="IPR002347">
    <property type="entry name" value="SDR_fam"/>
</dbReference>
<dbReference type="PANTHER" id="PTHR43391:SF15">
    <property type="entry name" value="17-BETA-HYDROXYSTEROID DEHYDROGENASE TYPE 1"/>
    <property type="match status" value="1"/>
</dbReference>
<dbReference type="PANTHER" id="PTHR43391">
    <property type="entry name" value="RETINOL DEHYDROGENASE-RELATED"/>
    <property type="match status" value="1"/>
</dbReference>
<dbReference type="Pfam" id="PF00106">
    <property type="entry name" value="adh_short"/>
    <property type="match status" value="1"/>
</dbReference>
<dbReference type="PIRSF" id="PIRSF000095">
    <property type="entry name" value="17beta-HSD"/>
    <property type="match status" value="1"/>
</dbReference>
<dbReference type="PRINTS" id="PR00081">
    <property type="entry name" value="GDHRDH"/>
</dbReference>
<dbReference type="PRINTS" id="PR00080">
    <property type="entry name" value="SDRFAMILY"/>
</dbReference>
<dbReference type="SUPFAM" id="SSF51735">
    <property type="entry name" value="NAD(P)-binding Rossmann-fold domains"/>
    <property type="match status" value="1"/>
</dbReference>
<dbReference type="PROSITE" id="PS00061">
    <property type="entry name" value="ADH_SHORT"/>
    <property type="match status" value="1"/>
</dbReference>
<gene>
    <name evidence="6" type="primary">Hsd17b1</name>
    <name type="synonym">Edh17b1</name>
</gene>
<proteinExistence type="evidence at protein level"/>
<comment type="function">
    <text evidence="1 3">Favors the reduction of estrogens and androgens. Converts estrone (E1) to a more potent estrogen, 17beta-estradiol (E2) (PubMed:9658408). Also has 20-alpha-HSD activity. Uses preferentially NADH (By similarity).</text>
</comment>
<comment type="catalytic activity">
    <reaction evidence="1">
        <text>17beta-estradiol + NAD(+) = estrone + NADH + H(+)</text>
        <dbReference type="Rhea" id="RHEA:24612"/>
        <dbReference type="ChEBI" id="CHEBI:15378"/>
        <dbReference type="ChEBI" id="CHEBI:16469"/>
        <dbReference type="ChEBI" id="CHEBI:17263"/>
        <dbReference type="ChEBI" id="CHEBI:57540"/>
        <dbReference type="ChEBI" id="CHEBI:57945"/>
        <dbReference type="EC" id="1.1.1.62"/>
    </reaction>
</comment>
<comment type="catalytic activity">
    <reaction evidence="3">
        <text>17beta-estradiol + NADP(+) = estrone + NADPH + H(+)</text>
        <dbReference type="Rhea" id="RHEA:24616"/>
        <dbReference type="ChEBI" id="CHEBI:15378"/>
        <dbReference type="ChEBI" id="CHEBI:16469"/>
        <dbReference type="ChEBI" id="CHEBI:17263"/>
        <dbReference type="ChEBI" id="CHEBI:57783"/>
        <dbReference type="ChEBI" id="CHEBI:58349"/>
        <dbReference type="EC" id="1.1.1.62"/>
    </reaction>
    <physiologicalReaction direction="right-to-left" evidence="5">
        <dbReference type="Rhea" id="RHEA:24618"/>
    </physiologicalReaction>
</comment>
<comment type="catalytic activity">
    <reaction evidence="3">
        <text>testosterone + NADP(+) = androst-4-ene-3,17-dione + NADPH + H(+)</text>
        <dbReference type="Rhea" id="RHEA:14981"/>
        <dbReference type="ChEBI" id="CHEBI:15378"/>
        <dbReference type="ChEBI" id="CHEBI:16422"/>
        <dbReference type="ChEBI" id="CHEBI:17347"/>
        <dbReference type="ChEBI" id="CHEBI:57783"/>
        <dbReference type="ChEBI" id="CHEBI:58349"/>
        <dbReference type="EC" id="1.1.1.51"/>
    </reaction>
    <physiologicalReaction direction="right-to-left" evidence="5">
        <dbReference type="Rhea" id="RHEA:14983"/>
    </physiologicalReaction>
</comment>
<comment type="pathway">
    <text evidence="3">Steroid biosynthesis; estrogen biosynthesis.</text>
</comment>
<comment type="subunit">
    <text evidence="1">Homodimer. Exists predominantly as a homodimer but also exits as monomer.</text>
</comment>
<comment type="subcellular location">
    <subcellularLocation>
        <location>Cytoplasm</location>
    </subcellularLocation>
</comment>
<comment type="similarity">
    <text evidence="4">Belongs to the short-chain dehydrogenases/reductases (SDR) family.</text>
</comment>
<reference key="1">
    <citation type="journal article" date="1996" name="Eur. J. Biochem.">
        <title>Molecular cloning of mouse 17 beta-hydroxysteroid dehydrogenase type 1 and characterization of enzyme activity.</title>
        <authorList>
            <person name="Nokelainen P."/>
            <person name="Puranen T."/>
            <person name="Peltoketo H."/>
            <person name="Orava M."/>
            <person name="Vihko P."/>
            <person name="Vihko R."/>
        </authorList>
    </citation>
    <scope>NUCLEOTIDE SEQUENCE [MRNA]</scope>
    <source>
        <tissue>Ovary</tissue>
    </source>
</reference>
<reference key="2">
    <citation type="journal article" date="1998" name="Mol. Endocrinol.">
        <title>Expression cloning of a novel estrogenic mouse 17 beta-hydroxysteroid dehydrogenase/17-ketosteroid reductase (m17HSD7), previously described as a prolactin receptor-associated protein (PRAP) in rat.</title>
        <authorList>
            <person name="Nokelainen P."/>
            <person name="Peltoketo H."/>
            <person name="Vihko R."/>
            <person name="Vihko P."/>
        </authorList>
    </citation>
    <scope>FUNCTION</scope>
    <scope>CATALYTIC ACTIVITY</scope>
</reference>
<keyword id="KW-0963">Cytoplasm</keyword>
<keyword id="KW-0444">Lipid biosynthesis</keyword>
<keyword id="KW-0443">Lipid metabolism</keyword>
<keyword id="KW-0520">NAD</keyword>
<keyword id="KW-0521">NADP</keyword>
<keyword id="KW-0560">Oxidoreductase</keyword>
<keyword id="KW-0597">Phosphoprotein</keyword>
<keyword id="KW-1185">Reference proteome</keyword>
<keyword id="KW-0752">Steroid biosynthesis</keyword>
<protein>
    <recommendedName>
        <fullName evidence="4">17-beta-hydroxysteroid dehydrogenase type 1</fullName>
        <shortName>17-beta-HSD 1</shortName>
        <ecNumber evidence="3">1.1.1.51</ecNumber>
    </recommendedName>
    <alternativeName>
        <fullName evidence="4">Estradiol 17-beta-dehydrogenase 1</fullName>
        <ecNumber evidence="3">1.1.1.62</ecNumber>
    </alternativeName>
</protein>
<sequence>MDPTVVLITGCSSGIGMHLAVRLASDRSQSFKVYATLRDLKAQGPLLEAARTQGCPPGSLEILELDVRDSKSVAAAQACVTEGRVDVLVCNAGRGLFGPLEAHELNAVGAVLDVNVLGTIRMLQAFLPDMKRRHSGRVLVTASVGGLMGLPFHEVYCASKFALEGLCESLAILLPLFGVHVSLIECGAVHTAFYEKLVGGPGGALERADAQTRHLFAHYLRGYEQALSEAQDPEEVTELFLTAMRAPQPALRYFSTNRFLPLARMRTEDPSGSSYVAAMHQEAFSNLQTQENAKAGAQVPGVSDTASSALICLPECAIPRVASELGWSASDKPGQDNSCYQQKI</sequence>
<organism>
    <name type="scientific">Mus musculus</name>
    <name type="common">Mouse</name>
    <dbReference type="NCBI Taxonomy" id="10090"/>
    <lineage>
        <taxon>Eukaryota</taxon>
        <taxon>Metazoa</taxon>
        <taxon>Chordata</taxon>
        <taxon>Craniata</taxon>
        <taxon>Vertebrata</taxon>
        <taxon>Euteleostomi</taxon>
        <taxon>Mammalia</taxon>
        <taxon>Eutheria</taxon>
        <taxon>Euarchontoglires</taxon>
        <taxon>Glires</taxon>
        <taxon>Rodentia</taxon>
        <taxon>Myomorpha</taxon>
        <taxon>Muroidea</taxon>
        <taxon>Muridae</taxon>
        <taxon>Murinae</taxon>
        <taxon>Mus</taxon>
        <taxon>Mus</taxon>
    </lineage>
</organism>
<name>DHB1_MOUSE</name>
<evidence type="ECO:0000250" key="1">
    <source>
        <dbReference type="UniProtKB" id="P14061"/>
    </source>
</evidence>
<evidence type="ECO:0000255" key="2">
    <source>
        <dbReference type="PROSITE-ProRule" id="PRU10001"/>
    </source>
</evidence>
<evidence type="ECO:0000269" key="3">
    <source>
    </source>
</evidence>
<evidence type="ECO:0000305" key="4"/>
<evidence type="ECO:0000305" key="5">
    <source>
    </source>
</evidence>
<evidence type="ECO:0000312" key="6">
    <source>
        <dbReference type="MGI" id="MGI:105077"/>
    </source>
</evidence>
<accession>P51656</accession>
<feature type="chain" id="PRO_0000054568" description="17-beta-hydroxysteroid dehydrogenase type 1">
    <location>
        <begin position="1"/>
        <end position="344"/>
    </location>
</feature>
<feature type="active site" description="Proton acceptor" evidence="2">
    <location>
        <position position="156"/>
    </location>
</feature>
<feature type="binding site" evidence="1">
    <location>
        <begin position="3"/>
        <end position="32"/>
    </location>
    <ligand>
        <name>NAD(+)</name>
        <dbReference type="ChEBI" id="CHEBI:57540"/>
    </ligand>
</feature>
<feature type="binding site" evidence="1">
    <location>
        <begin position="10"/>
        <end position="38"/>
    </location>
    <ligand>
        <name>NADP(+)</name>
        <dbReference type="ChEBI" id="CHEBI:58349"/>
    </ligand>
</feature>
<feature type="binding site" evidence="1">
    <location>
        <position position="66"/>
    </location>
    <ligand>
        <name>NADP(+)</name>
        <dbReference type="ChEBI" id="CHEBI:58349"/>
    </ligand>
</feature>
<feature type="binding site" evidence="1">
    <location>
        <position position="143"/>
    </location>
    <ligand>
        <name>substrate</name>
    </ligand>
</feature>
<feature type="binding site" evidence="1">
    <location>
        <position position="160"/>
    </location>
    <ligand>
        <name>NADP(+)</name>
        <dbReference type="ChEBI" id="CHEBI:58349"/>
    </ligand>
</feature>
<feature type="modified residue" description="Phosphoserine" evidence="1">
    <location>
        <position position="135"/>
    </location>
</feature>